<comment type="function">
    <text evidence="1">Represses a number of genes involved in the response to DNA damage (SOS response), including recA and lexA. In the presence of single-stranded DNA, RecA interacts with LexA causing an autocatalytic cleavage which disrupts the DNA-binding part of LexA, leading to derepression of the SOS regulon and eventually DNA repair.</text>
</comment>
<comment type="catalytic activity">
    <reaction evidence="1">
        <text>Hydrolysis of Ala-|-Gly bond in repressor LexA.</text>
        <dbReference type="EC" id="3.4.21.88"/>
    </reaction>
</comment>
<comment type="subunit">
    <text evidence="1">Homodimer.</text>
</comment>
<comment type="similarity">
    <text evidence="1">Belongs to the peptidase S24 family.</text>
</comment>
<dbReference type="EC" id="3.4.21.88" evidence="1"/>
<dbReference type="EMBL" id="CP000151">
    <property type="protein sequence ID" value="ABB08333.1"/>
    <property type="molecule type" value="Genomic_DNA"/>
</dbReference>
<dbReference type="RefSeq" id="WP_006754655.1">
    <property type="nucleotide sequence ID" value="NZ_WNDV01000004.1"/>
</dbReference>
<dbReference type="SMR" id="Q39GT3"/>
<dbReference type="MEROPS" id="S24.001"/>
<dbReference type="GeneID" id="62011030"/>
<dbReference type="KEGG" id="bur:Bcep18194_A4738"/>
<dbReference type="HOGENOM" id="CLU_066192_45_3_4"/>
<dbReference type="Proteomes" id="UP000002705">
    <property type="component" value="Chromosome 1"/>
</dbReference>
<dbReference type="GO" id="GO:0003677">
    <property type="term" value="F:DNA binding"/>
    <property type="evidence" value="ECO:0007669"/>
    <property type="project" value="UniProtKB-UniRule"/>
</dbReference>
<dbReference type="GO" id="GO:0004252">
    <property type="term" value="F:serine-type endopeptidase activity"/>
    <property type="evidence" value="ECO:0007669"/>
    <property type="project" value="UniProtKB-UniRule"/>
</dbReference>
<dbReference type="GO" id="GO:0006281">
    <property type="term" value="P:DNA repair"/>
    <property type="evidence" value="ECO:0007669"/>
    <property type="project" value="UniProtKB-UniRule"/>
</dbReference>
<dbReference type="GO" id="GO:0006260">
    <property type="term" value="P:DNA replication"/>
    <property type="evidence" value="ECO:0007669"/>
    <property type="project" value="UniProtKB-UniRule"/>
</dbReference>
<dbReference type="GO" id="GO:0045892">
    <property type="term" value="P:negative regulation of DNA-templated transcription"/>
    <property type="evidence" value="ECO:0007669"/>
    <property type="project" value="UniProtKB-UniRule"/>
</dbReference>
<dbReference type="GO" id="GO:0006508">
    <property type="term" value="P:proteolysis"/>
    <property type="evidence" value="ECO:0007669"/>
    <property type="project" value="InterPro"/>
</dbReference>
<dbReference type="GO" id="GO:0009432">
    <property type="term" value="P:SOS response"/>
    <property type="evidence" value="ECO:0007669"/>
    <property type="project" value="UniProtKB-UniRule"/>
</dbReference>
<dbReference type="CDD" id="cd06529">
    <property type="entry name" value="S24_LexA-like"/>
    <property type="match status" value="1"/>
</dbReference>
<dbReference type="FunFam" id="1.10.10.10:FF:000009">
    <property type="entry name" value="LexA repressor"/>
    <property type="match status" value="1"/>
</dbReference>
<dbReference type="FunFam" id="2.10.109.10:FF:000001">
    <property type="entry name" value="LexA repressor"/>
    <property type="match status" value="1"/>
</dbReference>
<dbReference type="Gene3D" id="2.10.109.10">
    <property type="entry name" value="Umud Fragment, subunit A"/>
    <property type="match status" value="1"/>
</dbReference>
<dbReference type="Gene3D" id="1.10.10.10">
    <property type="entry name" value="Winged helix-like DNA-binding domain superfamily/Winged helix DNA-binding domain"/>
    <property type="match status" value="1"/>
</dbReference>
<dbReference type="HAMAP" id="MF_00015">
    <property type="entry name" value="LexA"/>
    <property type="match status" value="1"/>
</dbReference>
<dbReference type="InterPro" id="IPR006200">
    <property type="entry name" value="LexA"/>
</dbReference>
<dbReference type="InterPro" id="IPR039418">
    <property type="entry name" value="LexA-like"/>
</dbReference>
<dbReference type="InterPro" id="IPR036286">
    <property type="entry name" value="LexA/Signal_pep-like_sf"/>
</dbReference>
<dbReference type="InterPro" id="IPR006199">
    <property type="entry name" value="LexA_DNA-bd_dom"/>
</dbReference>
<dbReference type="InterPro" id="IPR050077">
    <property type="entry name" value="LexA_repressor"/>
</dbReference>
<dbReference type="InterPro" id="IPR006197">
    <property type="entry name" value="Peptidase_S24_LexA"/>
</dbReference>
<dbReference type="InterPro" id="IPR015927">
    <property type="entry name" value="Peptidase_S24_S26A/B/C"/>
</dbReference>
<dbReference type="InterPro" id="IPR036388">
    <property type="entry name" value="WH-like_DNA-bd_sf"/>
</dbReference>
<dbReference type="InterPro" id="IPR036390">
    <property type="entry name" value="WH_DNA-bd_sf"/>
</dbReference>
<dbReference type="NCBIfam" id="TIGR00498">
    <property type="entry name" value="lexA"/>
    <property type="match status" value="1"/>
</dbReference>
<dbReference type="PANTHER" id="PTHR33516">
    <property type="entry name" value="LEXA REPRESSOR"/>
    <property type="match status" value="1"/>
</dbReference>
<dbReference type="PANTHER" id="PTHR33516:SF2">
    <property type="entry name" value="LEXA REPRESSOR-RELATED"/>
    <property type="match status" value="1"/>
</dbReference>
<dbReference type="Pfam" id="PF01726">
    <property type="entry name" value="LexA_DNA_bind"/>
    <property type="match status" value="1"/>
</dbReference>
<dbReference type="Pfam" id="PF00717">
    <property type="entry name" value="Peptidase_S24"/>
    <property type="match status" value="1"/>
</dbReference>
<dbReference type="PRINTS" id="PR00726">
    <property type="entry name" value="LEXASERPTASE"/>
</dbReference>
<dbReference type="SUPFAM" id="SSF51306">
    <property type="entry name" value="LexA/Signal peptidase"/>
    <property type="match status" value="1"/>
</dbReference>
<dbReference type="SUPFAM" id="SSF46785">
    <property type="entry name" value="Winged helix' DNA-binding domain"/>
    <property type="match status" value="1"/>
</dbReference>
<keyword id="KW-0068">Autocatalytic cleavage</keyword>
<keyword id="KW-0227">DNA damage</keyword>
<keyword id="KW-0234">DNA repair</keyword>
<keyword id="KW-0235">DNA replication</keyword>
<keyword id="KW-0238">DNA-binding</keyword>
<keyword id="KW-0378">Hydrolase</keyword>
<keyword id="KW-0678">Repressor</keyword>
<keyword id="KW-0742">SOS response</keyword>
<keyword id="KW-0804">Transcription</keyword>
<keyword id="KW-0805">Transcription regulation</keyword>
<accession>Q39GT3</accession>
<gene>
    <name evidence="1" type="primary">lexA</name>
    <name type="ordered locus">Bcep18194_A4738</name>
</gene>
<feature type="chain" id="PRO_1000001273" description="LexA repressor">
    <location>
        <begin position="1"/>
        <end position="215"/>
    </location>
</feature>
<feature type="DNA-binding region" description="H-T-H motif" evidence="1">
    <location>
        <begin position="28"/>
        <end position="48"/>
    </location>
</feature>
<feature type="active site" description="For autocatalytic cleavage activity" evidence="1">
    <location>
        <position position="133"/>
    </location>
</feature>
<feature type="active site" description="For autocatalytic cleavage activity" evidence="1">
    <location>
        <position position="170"/>
    </location>
</feature>
<feature type="site" description="Cleavage; by autolysis" evidence="1">
    <location>
        <begin position="98"/>
        <end position="99"/>
    </location>
</feature>
<organism>
    <name type="scientific">Burkholderia lata (strain ATCC 17760 / DSM 23089 / LMG 22485 / NCIMB 9086 / R18194 / 383)</name>
    <dbReference type="NCBI Taxonomy" id="482957"/>
    <lineage>
        <taxon>Bacteria</taxon>
        <taxon>Pseudomonadati</taxon>
        <taxon>Pseudomonadota</taxon>
        <taxon>Betaproteobacteria</taxon>
        <taxon>Burkholderiales</taxon>
        <taxon>Burkholderiaceae</taxon>
        <taxon>Burkholderia</taxon>
        <taxon>Burkholderia cepacia complex</taxon>
    </lineage>
</organism>
<name>LEXA_BURL3</name>
<protein>
    <recommendedName>
        <fullName evidence="1">LexA repressor</fullName>
        <ecNumber evidence="1">3.4.21.88</ecNumber>
    </recommendedName>
</protein>
<proteinExistence type="inferred from homology"/>
<sequence>MTKLTARQQQVFDLIRRAIERSGFPPTRAEIAAELGFSSPNAAEEHLRALARKGVIELAAGASRGIRLLGIDDAPHQFTLPHAGLMQLSLPLVGRVAAGSPILAQEHISQHYACDPALFTSKPDYLLKVRGLSMRDAGILDGDLLAVQKRTEAKDGQIIVARLGDDVTVKRLMRRPGGLELIAENPDYENIFVKAGSAEFALEGIAVGLIRSGEL</sequence>
<evidence type="ECO:0000255" key="1">
    <source>
        <dbReference type="HAMAP-Rule" id="MF_00015"/>
    </source>
</evidence>
<reference key="1">
    <citation type="submission" date="2005-10" db="EMBL/GenBank/DDBJ databases">
        <title>Complete sequence of chromosome 1 of Burkholderia sp. 383.</title>
        <authorList>
            <consortium name="US DOE Joint Genome Institute"/>
            <person name="Copeland A."/>
            <person name="Lucas S."/>
            <person name="Lapidus A."/>
            <person name="Barry K."/>
            <person name="Detter J.C."/>
            <person name="Glavina T."/>
            <person name="Hammon N."/>
            <person name="Israni S."/>
            <person name="Pitluck S."/>
            <person name="Chain P."/>
            <person name="Malfatti S."/>
            <person name="Shin M."/>
            <person name="Vergez L."/>
            <person name="Schmutz J."/>
            <person name="Larimer F."/>
            <person name="Land M."/>
            <person name="Kyrpides N."/>
            <person name="Lykidis A."/>
            <person name="Richardson P."/>
        </authorList>
    </citation>
    <scope>NUCLEOTIDE SEQUENCE [LARGE SCALE GENOMIC DNA]</scope>
    <source>
        <strain>ATCC 17760 / DSM 23089 / LMG 22485 / NCIMB 9086 / R18194 / 383</strain>
    </source>
</reference>